<dbReference type="EMBL" id="CP001396">
    <property type="protein sequence ID" value="ACR65189.1"/>
    <property type="molecule type" value="Genomic_DNA"/>
</dbReference>
<dbReference type="RefSeq" id="WP_001041786.1">
    <property type="nucleotide sequence ID" value="NC_012759.1"/>
</dbReference>
<dbReference type="SMR" id="C4ZV37"/>
<dbReference type="KEGG" id="ebw:BWG_0464"/>
<dbReference type="HOGENOM" id="CLU_034180_11_0_6"/>
<dbReference type="GO" id="GO:0005886">
    <property type="term" value="C:plasma membrane"/>
    <property type="evidence" value="ECO:0007669"/>
    <property type="project" value="UniProtKB-SubCell"/>
</dbReference>
<dbReference type="GO" id="GO:0042931">
    <property type="term" value="F:enterobactin transmembrane transporter activity"/>
    <property type="evidence" value="ECO:0007669"/>
    <property type="project" value="InterPro"/>
</dbReference>
<dbReference type="CDD" id="cd06173">
    <property type="entry name" value="MFS_MefA_like"/>
    <property type="match status" value="1"/>
</dbReference>
<dbReference type="FunFam" id="1.20.1250.20:FF:000056">
    <property type="entry name" value="Enterobactin exporter EntS"/>
    <property type="match status" value="1"/>
</dbReference>
<dbReference type="Gene3D" id="1.20.1250.20">
    <property type="entry name" value="MFS general substrate transporter like domains"/>
    <property type="match status" value="1"/>
</dbReference>
<dbReference type="HAMAP" id="MF_01436">
    <property type="entry name" value="MFS_EntS"/>
    <property type="match status" value="1"/>
</dbReference>
<dbReference type="InterPro" id="IPR023722">
    <property type="entry name" value="Enterobactin_exp_EntS"/>
</dbReference>
<dbReference type="InterPro" id="IPR020846">
    <property type="entry name" value="MFS_dom"/>
</dbReference>
<dbReference type="InterPro" id="IPR036259">
    <property type="entry name" value="MFS_trans_sf"/>
</dbReference>
<dbReference type="InterPro" id="IPR010290">
    <property type="entry name" value="TM_effector"/>
</dbReference>
<dbReference type="NCBIfam" id="NF007792">
    <property type="entry name" value="PRK10489.1"/>
    <property type="match status" value="1"/>
</dbReference>
<dbReference type="PANTHER" id="PTHR23513:SF9">
    <property type="entry name" value="ENTEROBACTIN EXPORTER ENTS"/>
    <property type="match status" value="1"/>
</dbReference>
<dbReference type="PANTHER" id="PTHR23513">
    <property type="entry name" value="INTEGRAL MEMBRANE EFFLUX PROTEIN-RELATED"/>
    <property type="match status" value="1"/>
</dbReference>
<dbReference type="Pfam" id="PF05977">
    <property type="entry name" value="MFS_3"/>
    <property type="match status" value="1"/>
</dbReference>
<dbReference type="SUPFAM" id="SSF103473">
    <property type="entry name" value="MFS general substrate transporter"/>
    <property type="match status" value="1"/>
</dbReference>
<dbReference type="PROSITE" id="PS50850">
    <property type="entry name" value="MFS"/>
    <property type="match status" value="1"/>
</dbReference>
<reference key="1">
    <citation type="journal article" date="2009" name="J. Bacteriol.">
        <title>Genomic sequencing reveals regulatory mutations and recombinational events in the widely used MC4100 lineage of Escherichia coli K-12.</title>
        <authorList>
            <person name="Ferenci T."/>
            <person name="Zhou Z."/>
            <person name="Betteridge T."/>
            <person name="Ren Y."/>
            <person name="Liu Y."/>
            <person name="Feng L."/>
            <person name="Reeves P.R."/>
            <person name="Wang L."/>
        </authorList>
    </citation>
    <scope>NUCLEOTIDE SEQUENCE [LARGE SCALE GENOMIC DNA]</scope>
    <source>
        <strain>K12 / MC4100 / BW2952</strain>
    </source>
</reference>
<sequence length="416" mass="43282">MNKQSWLLNLSLLKTHPAFRAVFLARFISIVSLGLLGVAVPVQIQMMTHSTWQVGLSVTLTGGAMFVGLMVGGVLADRYERKKVILLARGTCGIGFIGLCLNALLPEPSLLAIYLLGLWDGFFASLGVTALLAATPALVGRENLMQAGAITMLTVRLGSVISPMIGGLLLATGGVAWNYGLAAAGTFITLLPLLSLPALPPPPQPREHPLKSLLAGFRFLLASPLVGGIALLGGLLTMASAVRVLYPALADNWQMSAAQIGFLYAAIPLGAAIGALTSGKLAHSARPGLLMLLSTLGSFLAIGLFGLMPMWILGVVCLALFGWLSAVSSLLQYTMLQTQTPEAMLGRINGLWTAQNVTGDAIGAALLGGLGAMMTPVASASASGFGLLIIGVLLLLVLVELRHFRQTPPQVTASDS</sequence>
<organism>
    <name type="scientific">Escherichia coli (strain K12 / MC4100 / BW2952)</name>
    <dbReference type="NCBI Taxonomy" id="595496"/>
    <lineage>
        <taxon>Bacteria</taxon>
        <taxon>Pseudomonadati</taxon>
        <taxon>Pseudomonadota</taxon>
        <taxon>Gammaproteobacteria</taxon>
        <taxon>Enterobacterales</taxon>
        <taxon>Enterobacteriaceae</taxon>
        <taxon>Escherichia</taxon>
    </lineage>
</organism>
<proteinExistence type="inferred from homology"/>
<accession>C4ZV37</accession>
<name>ENTS_ECOBW</name>
<comment type="function">
    <text evidence="1">Component of an export pathway for enterobactin.</text>
</comment>
<comment type="subcellular location">
    <subcellularLocation>
        <location evidence="1">Cell inner membrane</location>
        <topology evidence="1">Multi-pass membrane protein</topology>
    </subcellularLocation>
</comment>
<comment type="similarity">
    <text evidence="1">Belongs to the major facilitator superfamily. EntS (TC 2.A.1.38) family.</text>
</comment>
<gene>
    <name evidence="1" type="primary">entS</name>
    <name type="ordered locus">BWG_0464</name>
</gene>
<feature type="chain" id="PRO_1000215279" description="Enterobactin exporter EntS">
    <location>
        <begin position="1"/>
        <end position="416"/>
    </location>
</feature>
<feature type="topological domain" description="Cytoplasmic" evidence="1">
    <location>
        <begin position="1"/>
        <end position="21"/>
    </location>
</feature>
<feature type="transmembrane region" description="Helical" evidence="1">
    <location>
        <begin position="22"/>
        <end position="42"/>
    </location>
</feature>
<feature type="topological domain" description="Periplasmic" evidence="1">
    <location>
        <begin position="43"/>
        <end position="55"/>
    </location>
</feature>
<feature type="transmembrane region" description="Helical" evidence="1">
    <location>
        <begin position="56"/>
        <end position="76"/>
    </location>
</feature>
<feature type="topological domain" description="Cytoplasmic" evidence="1">
    <location>
        <begin position="77"/>
        <end position="83"/>
    </location>
</feature>
<feature type="transmembrane region" description="Helical" evidence="1">
    <location>
        <begin position="84"/>
        <end position="104"/>
    </location>
</feature>
<feature type="topological domain" description="Periplasmic" evidence="1">
    <location>
        <begin position="105"/>
        <end position="109"/>
    </location>
</feature>
<feature type="transmembrane region" description="Helical" evidence="1">
    <location>
        <begin position="110"/>
        <end position="130"/>
    </location>
</feature>
<feature type="topological domain" description="Cytoplasmic" evidence="1">
    <location>
        <begin position="131"/>
        <end position="156"/>
    </location>
</feature>
<feature type="transmembrane region" description="Helical" evidence="1">
    <location>
        <begin position="157"/>
        <end position="177"/>
    </location>
</feature>
<feature type="topological domain" description="Periplasmic" evidence="1">
    <location>
        <position position="178"/>
    </location>
</feature>
<feature type="transmembrane region" description="Helical" evidence="1">
    <location>
        <begin position="179"/>
        <end position="199"/>
    </location>
</feature>
<feature type="topological domain" description="Cytoplasmic" evidence="1">
    <location>
        <begin position="200"/>
        <end position="218"/>
    </location>
</feature>
<feature type="transmembrane region" description="Helical" evidence="1">
    <location>
        <begin position="219"/>
        <end position="239"/>
    </location>
</feature>
<feature type="topological domain" description="Periplasmic" evidence="1">
    <location>
        <begin position="240"/>
        <end position="256"/>
    </location>
</feature>
<feature type="transmembrane region" description="Helical" evidence="1">
    <location>
        <begin position="257"/>
        <end position="277"/>
    </location>
</feature>
<feature type="topological domain" description="Cytoplasmic" evidence="1">
    <location>
        <begin position="278"/>
        <end position="287"/>
    </location>
</feature>
<feature type="transmembrane region" description="Helical" evidence="1">
    <location>
        <begin position="288"/>
        <end position="307"/>
    </location>
</feature>
<feature type="topological domain" description="Periplasmic" evidence="1">
    <location>
        <begin position="308"/>
        <end position="313"/>
    </location>
</feature>
<feature type="transmembrane region" description="Helical" evidence="1">
    <location>
        <begin position="314"/>
        <end position="336"/>
    </location>
</feature>
<feature type="topological domain" description="Cytoplasmic" evidence="1">
    <location>
        <begin position="337"/>
        <end position="356"/>
    </location>
</feature>
<feature type="transmembrane region" description="Helical" evidence="1">
    <location>
        <begin position="357"/>
        <end position="377"/>
    </location>
</feature>
<feature type="topological domain" description="Periplasmic" evidence="1">
    <location>
        <position position="378"/>
    </location>
</feature>
<feature type="transmembrane region" description="Helical" evidence="1">
    <location>
        <begin position="379"/>
        <end position="399"/>
    </location>
</feature>
<feature type="topological domain" description="Cytoplasmic" evidence="1">
    <location>
        <begin position="400"/>
        <end position="416"/>
    </location>
</feature>
<protein>
    <recommendedName>
        <fullName evidence="1">Enterobactin exporter EntS</fullName>
    </recommendedName>
</protein>
<keyword id="KW-0997">Cell inner membrane</keyword>
<keyword id="KW-1003">Cell membrane</keyword>
<keyword id="KW-0472">Membrane</keyword>
<keyword id="KW-0812">Transmembrane</keyword>
<keyword id="KW-1133">Transmembrane helix</keyword>
<keyword id="KW-0813">Transport</keyword>
<evidence type="ECO:0000255" key="1">
    <source>
        <dbReference type="HAMAP-Rule" id="MF_01436"/>
    </source>
</evidence>